<name>TILS_PSESM</name>
<protein>
    <recommendedName>
        <fullName evidence="1">tRNA(Ile)-lysidine synthase</fullName>
        <ecNumber evidence="1">6.3.4.19</ecNumber>
    </recommendedName>
    <alternativeName>
        <fullName evidence="1">tRNA(Ile)-2-lysyl-cytidine synthase</fullName>
    </alternativeName>
    <alternativeName>
        <fullName evidence="1">tRNA(Ile)-lysidine synthetase</fullName>
    </alternativeName>
</protein>
<accession>Q886M6</accession>
<comment type="function">
    <text evidence="1">Ligates lysine onto the cytidine present at position 34 of the AUA codon-specific tRNA(Ile) that contains the anticodon CAU, in an ATP-dependent manner. Cytidine is converted to lysidine, thus changing the amino acid specificity of the tRNA from methionine to isoleucine.</text>
</comment>
<comment type="catalytic activity">
    <reaction evidence="1">
        <text>cytidine(34) in tRNA(Ile2) + L-lysine + ATP = lysidine(34) in tRNA(Ile2) + AMP + diphosphate + H(+)</text>
        <dbReference type="Rhea" id="RHEA:43744"/>
        <dbReference type="Rhea" id="RHEA-COMP:10625"/>
        <dbReference type="Rhea" id="RHEA-COMP:10670"/>
        <dbReference type="ChEBI" id="CHEBI:15378"/>
        <dbReference type="ChEBI" id="CHEBI:30616"/>
        <dbReference type="ChEBI" id="CHEBI:32551"/>
        <dbReference type="ChEBI" id="CHEBI:33019"/>
        <dbReference type="ChEBI" id="CHEBI:82748"/>
        <dbReference type="ChEBI" id="CHEBI:83665"/>
        <dbReference type="ChEBI" id="CHEBI:456215"/>
        <dbReference type="EC" id="6.3.4.19"/>
    </reaction>
</comment>
<comment type="subcellular location">
    <subcellularLocation>
        <location evidence="1">Cytoplasm</location>
    </subcellularLocation>
</comment>
<comment type="domain">
    <text>The N-terminal region contains the highly conserved SGGXDS motif, predicted to be a P-loop motif involved in ATP binding.</text>
</comment>
<comment type="similarity">
    <text evidence="1">Belongs to the tRNA(Ile)-lysidine synthase family.</text>
</comment>
<comment type="sequence caution" evidence="2">
    <conflict type="erroneous initiation">
        <sequence resource="EMBL-CDS" id="AAO55071"/>
    </conflict>
</comment>
<evidence type="ECO:0000255" key="1">
    <source>
        <dbReference type="HAMAP-Rule" id="MF_01161"/>
    </source>
</evidence>
<evidence type="ECO:0000305" key="2"/>
<proteinExistence type="inferred from homology"/>
<gene>
    <name evidence="1" type="primary">tilS</name>
    <name type="ordered locus">PSPTO_1551</name>
</gene>
<sequence length="445" mass="49247">MTTSTPNGHDLPARLLQALAPWRTASTWYVGFSGGLDSTVLLHLLAELAKRANLPALHAIHVHHGLQAIADAWPEHCRQVCQALGVAFESVRVKVEPGASVEQAARQARYAAFTERLGEGDVLLTGQHRDDQAETLLFRLLRGAGVRGLAAMPEQRRLGRGHLARPLLGVSRVELESYARRQGLRWVEDPSNDDQQFSRNFLRSQVLPLLTSIWPHATASLARTAGHLGEAQQLLDELAAQDVANAQATTPFSWLGLPVLNLGPIARLSGARQRNVMRHWLAPLTRLPDSDHWAGWEALRDAAQDARPLWRLADGALHRAQGCIWWLPAGWEQACSEAVNWADPRAPLDLPENGQVSLEGEAPLGDLSVRYRQGAEVMHLSGRGRRDLKRLLNEQAVPAFLRGRWPLLYRDDELLAVANLPGLDGSPNERWRLRWVAPTGDQSLS</sequence>
<keyword id="KW-0067">ATP-binding</keyword>
<keyword id="KW-0963">Cytoplasm</keyword>
<keyword id="KW-0436">Ligase</keyword>
<keyword id="KW-0547">Nucleotide-binding</keyword>
<keyword id="KW-1185">Reference proteome</keyword>
<keyword id="KW-0819">tRNA processing</keyword>
<feature type="chain" id="PRO_0000181750" description="tRNA(Ile)-lysidine synthase">
    <location>
        <begin position="1"/>
        <end position="445"/>
    </location>
</feature>
<feature type="binding site" evidence="1">
    <location>
        <begin position="33"/>
        <end position="38"/>
    </location>
    <ligand>
        <name>ATP</name>
        <dbReference type="ChEBI" id="CHEBI:30616"/>
    </ligand>
</feature>
<reference key="1">
    <citation type="journal article" date="2003" name="Proc. Natl. Acad. Sci. U.S.A.">
        <title>The complete genome sequence of the Arabidopsis and tomato pathogen Pseudomonas syringae pv. tomato DC3000.</title>
        <authorList>
            <person name="Buell C.R."/>
            <person name="Joardar V."/>
            <person name="Lindeberg M."/>
            <person name="Selengut J."/>
            <person name="Paulsen I.T."/>
            <person name="Gwinn M.L."/>
            <person name="Dodson R.J."/>
            <person name="DeBoy R.T."/>
            <person name="Durkin A.S."/>
            <person name="Kolonay J.F."/>
            <person name="Madupu R."/>
            <person name="Daugherty S.C."/>
            <person name="Brinkac L.M."/>
            <person name="Beanan M.J."/>
            <person name="Haft D.H."/>
            <person name="Nelson W.C."/>
            <person name="Davidsen T.M."/>
            <person name="Zafar N."/>
            <person name="Zhou L."/>
            <person name="Liu J."/>
            <person name="Yuan Q."/>
            <person name="Khouri H.M."/>
            <person name="Fedorova N.B."/>
            <person name="Tran B."/>
            <person name="Russell D."/>
            <person name="Berry K.J."/>
            <person name="Utterback T.R."/>
            <person name="Van Aken S.E."/>
            <person name="Feldblyum T.V."/>
            <person name="D'Ascenzo M."/>
            <person name="Deng W.-L."/>
            <person name="Ramos A.R."/>
            <person name="Alfano J.R."/>
            <person name="Cartinhour S."/>
            <person name="Chatterjee A.K."/>
            <person name="Delaney T.P."/>
            <person name="Lazarowitz S.G."/>
            <person name="Martin G.B."/>
            <person name="Schneider D.J."/>
            <person name="Tang X."/>
            <person name="Bender C.L."/>
            <person name="White O."/>
            <person name="Fraser C.M."/>
            <person name="Collmer A."/>
        </authorList>
    </citation>
    <scope>NUCLEOTIDE SEQUENCE [LARGE SCALE GENOMIC DNA]</scope>
    <source>
        <strain>ATCC BAA-871 / DC3000</strain>
    </source>
</reference>
<organism>
    <name type="scientific">Pseudomonas syringae pv. tomato (strain ATCC BAA-871 / DC3000)</name>
    <dbReference type="NCBI Taxonomy" id="223283"/>
    <lineage>
        <taxon>Bacteria</taxon>
        <taxon>Pseudomonadati</taxon>
        <taxon>Pseudomonadota</taxon>
        <taxon>Gammaproteobacteria</taxon>
        <taxon>Pseudomonadales</taxon>
        <taxon>Pseudomonadaceae</taxon>
        <taxon>Pseudomonas</taxon>
    </lineage>
</organism>
<dbReference type="EC" id="6.3.4.19" evidence="1"/>
<dbReference type="EMBL" id="AE016853">
    <property type="protein sequence ID" value="AAO55071.1"/>
    <property type="status" value="ALT_INIT"/>
    <property type="molecule type" value="Genomic_DNA"/>
</dbReference>
<dbReference type="RefSeq" id="NP_791376.1">
    <property type="nucleotide sequence ID" value="NC_004578.1"/>
</dbReference>
<dbReference type="RefSeq" id="WP_044390753.1">
    <property type="nucleotide sequence ID" value="NC_004578.1"/>
</dbReference>
<dbReference type="SMR" id="Q886M6"/>
<dbReference type="STRING" id="223283.PSPTO_1551"/>
<dbReference type="GeneID" id="1183188"/>
<dbReference type="KEGG" id="pst:PSPTO_1551"/>
<dbReference type="PATRIC" id="fig|223283.9.peg.1577"/>
<dbReference type="eggNOG" id="COG0037">
    <property type="taxonomic scope" value="Bacteria"/>
</dbReference>
<dbReference type="HOGENOM" id="CLU_018869_2_0_6"/>
<dbReference type="OrthoDB" id="9807403at2"/>
<dbReference type="Proteomes" id="UP000002515">
    <property type="component" value="Chromosome"/>
</dbReference>
<dbReference type="GO" id="GO:0005737">
    <property type="term" value="C:cytoplasm"/>
    <property type="evidence" value="ECO:0007669"/>
    <property type="project" value="UniProtKB-SubCell"/>
</dbReference>
<dbReference type="GO" id="GO:0005524">
    <property type="term" value="F:ATP binding"/>
    <property type="evidence" value="ECO:0007669"/>
    <property type="project" value="UniProtKB-UniRule"/>
</dbReference>
<dbReference type="GO" id="GO:0032267">
    <property type="term" value="F:tRNA(Ile)-lysidine synthase activity"/>
    <property type="evidence" value="ECO:0007669"/>
    <property type="project" value="UniProtKB-EC"/>
</dbReference>
<dbReference type="GO" id="GO:0006400">
    <property type="term" value="P:tRNA modification"/>
    <property type="evidence" value="ECO:0007669"/>
    <property type="project" value="UniProtKB-UniRule"/>
</dbReference>
<dbReference type="CDD" id="cd01992">
    <property type="entry name" value="TilS_N"/>
    <property type="match status" value="1"/>
</dbReference>
<dbReference type="Gene3D" id="1.20.59.20">
    <property type="match status" value="1"/>
</dbReference>
<dbReference type="Gene3D" id="3.40.50.620">
    <property type="entry name" value="HUPs"/>
    <property type="match status" value="1"/>
</dbReference>
<dbReference type="HAMAP" id="MF_01161">
    <property type="entry name" value="tRNA_Ile_lys_synt"/>
    <property type="match status" value="1"/>
</dbReference>
<dbReference type="InterPro" id="IPR012796">
    <property type="entry name" value="Lysidine-tRNA-synth_C"/>
</dbReference>
<dbReference type="InterPro" id="IPR014729">
    <property type="entry name" value="Rossmann-like_a/b/a_fold"/>
</dbReference>
<dbReference type="InterPro" id="IPR011063">
    <property type="entry name" value="TilS/TtcA_N"/>
</dbReference>
<dbReference type="InterPro" id="IPR012094">
    <property type="entry name" value="tRNA_Ile_lys_synt"/>
</dbReference>
<dbReference type="InterPro" id="IPR012795">
    <property type="entry name" value="tRNA_Ile_lys_synt_N"/>
</dbReference>
<dbReference type="InterPro" id="IPR015262">
    <property type="entry name" value="tRNA_Ile_lys_synt_subst-bd"/>
</dbReference>
<dbReference type="NCBIfam" id="TIGR02433">
    <property type="entry name" value="lysidine_TilS_C"/>
    <property type="match status" value="1"/>
</dbReference>
<dbReference type="NCBIfam" id="TIGR02432">
    <property type="entry name" value="lysidine_TilS_N"/>
    <property type="match status" value="1"/>
</dbReference>
<dbReference type="PANTHER" id="PTHR43033">
    <property type="entry name" value="TRNA(ILE)-LYSIDINE SYNTHASE-RELATED"/>
    <property type="match status" value="1"/>
</dbReference>
<dbReference type="PANTHER" id="PTHR43033:SF1">
    <property type="entry name" value="TRNA(ILE)-LYSIDINE SYNTHASE-RELATED"/>
    <property type="match status" value="1"/>
</dbReference>
<dbReference type="Pfam" id="PF01171">
    <property type="entry name" value="ATP_bind_3"/>
    <property type="match status" value="1"/>
</dbReference>
<dbReference type="Pfam" id="PF09179">
    <property type="entry name" value="TilS"/>
    <property type="match status" value="1"/>
</dbReference>
<dbReference type="Pfam" id="PF11734">
    <property type="entry name" value="TilS_C"/>
    <property type="match status" value="1"/>
</dbReference>
<dbReference type="SMART" id="SM00977">
    <property type="entry name" value="TilS_C"/>
    <property type="match status" value="1"/>
</dbReference>
<dbReference type="SUPFAM" id="SSF52402">
    <property type="entry name" value="Adenine nucleotide alpha hydrolases-like"/>
    <property type="match status" value="1"/>
</dbReference>
<dbReference type="SUPFAM" id="SSF82829">
    <property type="entry name" value="MesJ substrate recognition domain-like"/>
    <property type="match status" value="1"/>
</dbReference>
<dbReference type="SUPFAM" id="SSF56037">
    <property type="entry name" value="PheT/TilS domain"/>
    <property type="match status" value="1"/>
</dbReference>